<comment type="function">
    <text evidence="1">NDH shuttles electrons from NAD(P)H:plastoquinone, via FMN and iron-sulfur (Fe-S) centers, to quinones in the photosynthetic chain and possibly in a chloroplast respiratory chain. The immediate electron acceptor for the enzyme in this species is believed to be plastoquinone. Couples the redox reaction to proton translocation, and thus conserves the redox energy in a proton gradient.</text>
</comment>
<comment type="catalytic activity">
    <reaction evidence="1">
        <text>a plastoquinone + NADH + (n+1) H(+)(in) = a plastoquinol + NAD(+) + n H(+)(out)</text>
        <dbReference type="Rhea" id="RHEA:42608"/>
        <dbReference type="Rhea" id="RHEA-COMP:9561"/>
        <dbReference type="Rhea" id="RHEA-COMP:9562"/>
        <dbReference type="ChEBI" id="CHEBI:15378"/>
        <dbReference type="ChEBI" id="CHEBI:17757"/>
        <dbReference type="ChEBI" id="CHEBI:57540"/>
        <dbReference type="ChEBI" id="CHEBI:57945"/>
        <dbReference type="ChEBI" id="CHEBI:62192"/>
    </reaction>
</comment>
<comment type="catalytic activity">
    <reaction evidence="1">
        <text>a plastoquinone + NADPH + (n+1) H(+)(in) = a plastoquinol + NADP(+) + n H(+)(out)</text>
        <dbReference type="Rhea" id="RHEA:42612"/>
        <dbReference type="Rhea" id="RHEA-COMP:9561"/>
        <dbReference type="Rhea" id="RHEA-COMP:9562"/>
        <dbReference type="ChEBI" id="CHEBI:15378"/>
        <dbReference type="ChEBI" id="CHEBI:17757"/>
        <dbReference type="ChEBI" id="CHEBI:57783"/>
        <dbReference type="ChEBI" id="CHEBI:58349"/>
        <dbReference type="ChEBI" id="CHEBI:62192"/>
    </reaction>
</comment>
<comment type="cofactor">
    <cofactor evidence="1">
        <name>[4Fe-4S] cluster</name>
        <dbReference type="ChEBI" id="CHEBI:49883"/>
    </cofactor>
    <text evidence="1">Binds 1 [4Fe-4S] cluster.</text>
</comment>
<comment type="subunit">
    <text evidence="1">NDH is composed of at least 16 different subunits, 5 of which are encoded in the nucleus.</text>
</comment>
<comment type="subcellular location">
    <subcellularLocation>
        <location evidence="1">Plastid</location>
        <location evidence="1">Chloroplast thylakoid membrane</location>
        <topology evidence="1">Peripheral membrane protein</topology>
        <orientation evidence="1">Stromal side</orientation>
    </subcellularLocation>
</comment>
<comment type="similarity">
    <text evidence="1">Belongs to the complex I 20 kDa subunit family.</text>
</comment>
<accession>Q8WI14</accession>
<organism>
    <name type="scientific">Psilotum nudum</name>
    <name type="common">Whisk fern</name>
    <name type="synonym">Lycopodium nudum</name>
    <dbReference type="NCBI Taxonomy" id="3240"/>
    <lineage>
        <taxon>Eukaryota</taxon>
        <taxon>Viridiplantae</taxon>
        <taxon>Streptophyta</taxon>
        <taxon>Embryophyta</taxon>
        <taxon>Tracheophyta</taxon>
        <taxon>Polypodiopsida</taxon>
        <taxon>Ophioglossidae</taxon>
        <taxon>Psilotales</taxon>
        <taxon>Psilotaceae</taxon>
        <taxon>Psilotum</taxon>
    </lineage>
</organism>
<feature type="chain" id="PRO_0000358580" description="NAD(P)H-quinone oxidoreductase subunit K, chloroplastic">
    <location>
        <begin position="1"/>
        <end position="207"/>
    </location>
</feature>
<feature type="binding site" evidence="1">
    <location>
        <position position="47"/>
    </location>
    <ligand>
        <name>[4Fe-4S] cluster</name>
        <dbReference type="ChEBI" id="CHEBI:49883"/>
    </ligand>
</feature>
<feature type="binding site" evidence="1">
    <location>
        <position position="48"/>
    </location>
    <ligand>
        <name>[4Fe-4S] cluster</name>
        <dbReference type="ChEBI" id="CHEBI:49883"/>
    </ligand>
</feature>
<feature type="binding site" evidence="1">
    <location>
        <position position="112"/>
    </location>
    <ligand>
        <name>[4Fe-4S] cluster</name>
        <dbReference type="ChEBI" id="CHEBI:49883"/>
    </ligand>
</feature>
<feature type="binding site" evidence="1">
    <location>
        <position position="143"/>
    </location>
    <ligand>
        <name>[4Fe-4S] cluster</name>
        <dbReference type="ChEBI" id="CHEBI:49883"/>
    </ligand>
</feature>
<reference key="1">
    <citation type="journal article" date="2004" name="Mol. Biol. Evol.">
        <title>Chloroplast phylogeny indicates that bryophytes are monophyletic.</title>
        <authorList>
            <person name="Nishiyama T."/>
            <person name="Wolf P.G."/>
            <person name="Kugita M."/>
            <person name="Sinclair R.B."/>
            <person name="Sugita M."/>
            <person name="Sugiura C."/>
            <person name="Wakasugi T."/>
            <person name="Yamada K."/>
            <person name="Yoshinaga K."/>
            <person name="Yamaguchi K."/>
            <person name="Ueda K."/>
            <person name="Hasebe M."/>
        </authorList>
    </citation>
    <scope>NUCLEOTIDE SEQUENCE [LARGE SCALE GENOMIC DNA]</scope>
    <source>
        <strain>Kingyoku</strain>
    </source>
</reference>
<dbReference type="EC" id="7.1.1.-" evidence="1"/>
<dbReference type="EMBL" id="AP004638">
    <property type="protein sequence ID" value="BAB84220.1"/>
    <property type="molecule type" value="Genomic_DNA"/>
</dbReference>
<dbReference type="RefSeq" id="NP_569633.2">
    <property type="nucleotide sequence ID" value="NC_003386.1"/>
</dbReference>
<dbReference type="SMR" id="Q8WI14"/>
<dbReference type="GeneID" id="2545126"/>
<dbReference type="GO" id="GO:0009535">
    <property type="term" value="C:chloroplast thylakoid membrane"/>
    <property type="evidence" value="ECO:0007669"/>
    <property type="project" value="UniProtKB-SubCell"/>
</dbReference>
<dbReference type="GO" id="GO:0045271">
    <property type="term" value="C:respiratory chain complex I"/>
    <property type="evidence" value="ECO:0007669"/>
    <property type="project" value="TreeGrafter"/>
</dbReference>
<dbReference type="GO" id="GO:0051539">
    <property type="term" value="F:4 iron, 4 sulfur cluster binding"/>
    <property type="evidence" value="ECO:0007669"/>
    <property type="project" value="UniProtKB-KW"/>
</dbReference>
<dbReference type="GO" id="GO:0005506">
    <property type="term" value="F:iron ion binding"/>
    <property type="evidence" value="ECO:0007669"/>
    <property type="project" value="UniProtKB-UniRule"/>
</dbReference>
<dbReference type="GO" id="GO:0008137">
    <property type="term" value="F:NADH dehydrogenase (ubiquinone) activity"/>
    <property type="evidence" value="ECO:0007669"/>
    <property type="project" value="InterPro"/>
</dbReference>
<dbReference type="GO" id="GO:0048038">
    <property type="term" value="F:quinone binding"/>
    <property type="evidence" value="ECO:0007669"/>
    <property type="project" value="UniProtKB-KW"/>
</dbReference>
<dbReference type="GO" id="GO:0009060">
    <property type="term" value="P:aerobic respiration"/>
    <property type="evidence" value="ECO:0007669"/>
    <property type="project" value="TreeGrafter"/>
</dbReference>
<dbReference type="GO" id="GO:0015990">
    <property type="term" value="P:electron transport coupled proton transport"/>
    <property type="evidence" value="ECO:0007669"/>
    <property type="project" value="TreeGrafter"/>
</dbReference>
<dbReference type="GO" id="GO:0019684">
    <property type="term" value="P:photosynthesis, light reaction"/>
    <property type="evidence" value="ECO:0007669"/>
    <property type="project" value="UniProtKB-UniRule"/>
</dbReference>
<dbReference type="FunFam" id="3.40.50.12280:FF:000003">
    <property type="entry name" value="NAD(P)H-quinone oxidoreductase subunit K, chloroplastic"/>
    <property type="match status" value="1"/>
</dbReference>
<dbReference type="Gene3D" id="3.40.50.12280">
    <property type="match status" value="1"/>
</dbReference>
<dbReference type="HAMAP" id="MF_01356">
    <property type="entry name" value="NDH1_NuoB"/>
    <property type="match status" value="1"/>
</dbReference>
<dbReference type="InterPro" id="IPR006137">
    <property type="entry name" value="NADH_UbQ_OxRdtase-like_20kDa"/>
</dbReference>
<dbReference type="InterPro" id="IPR006138">
    <property type="entry name" value="NADH_UQ_OxRdtase_20Kd_su"/>
</dbReference>
<dbReference type="NCBIfam" id="TIGR01957">
    <property type="entry name" value="nuoB_fam"/>
    <property type="match status" value="1"/>
</dbReference>
<dbReference type="NCBIfam" id="NF005012">
    <property type="entry name" value="PRK06411.1"/>
    <property type="match status" value="1"/>
</dbReference>
<dbReference type="PANTHER" id="PTHR11995">
    <property type="entry name" value="NADH DEHYDROGENASE"/>
    <property type="match status" value="1"/>
</dbReference>
<dbReference type="PANTHER" id="PTHR11995:SF14">
    <property type="entry name" value="NADH DEHYDROGENASE [UBIQUINONE] IRON-SULFUR PROTEIN 7, MITOCHONDRIAL"/>
    <property type="match status" value="1"/>
</dbReference>
<dbReference type="Pfam" id="PF01058">
    <property type="entry name" value="Oxidored_q6"/>
    <property type="match status" value="1"/>
</dbReference>
<dbReference type="SUPFAM" id="SSF56770">
    <property type="entry name" value="HydA/Nqo6-like"/>
    <property type="match status" value="1"/>
</dbReference>
<dbReference type="PROSITE" id="PS01150">
    <property type="entry name" value="COMPLEX1_20K"/>
    <property type="match status" value="1"/>
</dbReference>
<name>NDHK_PSINU</name>
<evidence type="ECO:0000255" key="1">
    <source>
        <dbReference type="HAMAP-Rule" id="MF_01356"/>
    </source>
</evidence>
<gene>
    <name evidence="1" type="primary">ndhK</name>
</gene>
<sequence>MNITINPMESLVSKPNTSNSIILTNLNDFSNWARLSSLWPLLYGTSCCFIEFASLIGSRFDFDRYGLVPRSSPRQADLIITAGTVTMKMAPSLIRLYEQMPEPKYVIAMGACTITGGMFSTDSYSTVRGVDKLIPVDIYLPGCPPKPEAIIDAVIKLRKKVAQETYKDQKRSIRGNRFFTLKHQFDFVPSIHTGQYTQQLHDKSLSK</sequence>
<geneLocation type="chloroplast"/>
<keyword id="KW-0004">4Fe-4S</keyword>
<keyword id="KW-0150">Chloroplast</keyword>
<keyword id="KW-0408">Iron</keyword>
<keyword id="KW-0411">Iron-sulfur</keyword>
<keyword id="KW-0472">Membrane</keyword>
<keyword id="KW-0479">Metal-binding</keyword>
<keyword id="KW-0520">NAD</keyword>
<keyword id="KW-0521">NADP</keyword>
<keyword id="KW-0934">Plastid</keyword>
<keyword id="KW-0618">Plastoquinone</keyword>
<keyword id="KW-0874">Quinone</keyword>
<keyword id="KW-0793">Thylakoid</keyword>
<keyword id="KW-1278">Translocase</keyword>
<keyword id="KW-0813">Transport</keyword>
<protein>
    <recommendedName>
        <fullName evidence="1">NAD(P)H-quinone oxidoreductase subunit K, chloroplastic</fullName>
        <ecNumber evidence="1">7.1.1.-</ecNumber>
    </recommendedName>
    <alternativeName>
        <fullName evidence="1">NAD(P)H dehydrogenase subunit K</fullName>
    </alternativeName>
    <alternativeName>
        <fullName evidence="1">NADH-plastoquinone oxidoreductase subunit K</fullName>
    </alternativeName>
</protein>
<proteinExistence type="inferred from homology"/>